<keyword id="KW-1185">Reference proteome</keyword>
<feature type="chain" id="PRO_0000147435" description="Universal stress protein G">
    <location>
        <begin position="1"/>
        <end position="142"/>
    </location>
</feature>
<organism>
    <name type="scientific">Salmonella typhimurium (strain LT2 / SGSC1412 / ATCC 700720)</name>
    <dbReference type="NCBI Taxonomy" id="99287"/>
    <lineage>
        <taxon>Bacteria</taxon>
        <taxon>Pseudomonadati</taxon>
        <taxon>Pseudomonadota</taxon>
        <taxon>Gammaproteobacteria</taxon>
        <taxon>Enterobacterales</taxon>
        <taxon>Enterobacteriaceae</taxon>
        <taxon>Salmonella</taxon>
    </lineage>
</organism>
<proteinExistence type="inferred from homology"/>
<comment type="similarity">
    <text evidence="1">Belongs to the universal stress protein A family.</text>
</comment>
<reference key="1">
    <citation type="journal article" date="2001" name="Nature">
        <title>Complete genome sequence of Salmonella enterica serovar Typhimurium LT2.</title>
        <authorList>
            <person name="McClelland M."/>
            <person name="Sanderson K.E."/>
            <person name="Spieth J."/>
            <person name="Clifton S.W."/>
            <person name="Latreille P."/>
            <person name="Courtney L."/>
            <person name="Porwollik S."/>
            <person name="Ali J."/>
            <person name="Dante M."/>
            <person name="Du F."/>
            <person name="Hou S."/>
            <person name="Layman D."/>
            <person name="Leonard S."/>
            <person name="Nguyen C."/>
            <person name="Scott K."/>
            <person name="Holmes A."/>
            <person name="Grewal N."/>
            <person name="Mulvaney E."/>
            <person name="Ryan E."/>
            <person name="Sun H."/>
            <person name="Florea L."/>
            <person name="Miller W."/>
            <person name="Stoneking T."/>
            <person name="Nhan M."/>
            <person name="Waterston R."/>
            <person name="Wilson R.K."/>
        </authorList>
    </citation>
    <scope>NUCLEOTIDE SEQUENCE [LARGE SCALE GENOMIC DNA]</scope>
    <source>
        <strain>LT2 / SGSC1412 / ATCC 700720</strain>
    </source>
</reference>
<evidence type="ECO:0000305" key="1"/>
<protein>
    <recommendedName>
        <fullName>Universal stress protein G</fullName>
    </recommendedName>
</protein>
<accession>P67093</accession>
<accession>Q8XGB9</accession>
<name>USPG_SALTY</name>
<dbReference type="EMBL" id="AE006468">
    <property type="protein sequence ID" value="AAL19565.1"/>
    <property type="molecule type" value="Genomic_DNA"/>
</dbReference>
<dbReference type="RefSeq" id="WP_000278499.1">
    <property type="nucleotide sequence ID" value="NC_003197.2"/>
</dbReference>
<dbReference type="SMR" id="P67093"/>
<dbReference type="STRING" id="99287.STM0614"/>
<dbReference type="PaxDb" id="99287-STM0614"/>
<dbReference type="KEGG" id="stm:STM0614"/>
<dbReference type="PATRIC" id="fig|99287.12.peg.646"/>
<dbReference type="HOGENOM" id="CLU_049301_12_0_6"/>
<dbReference type="OMA" id="VIRHTHI"/>
<dbReference type="PhylomeDB" id="P67093"/>
<dbReference type="BioCyc" id="SENT99287:STM0614-MONOMER"/>
<dbReference type="Proteomes" id="UP000001014">
    <property type="component" value="Chromosome"/>
</dbReference>
<dbReference type="CDD" id="cd00293">
    <property type="entry name" value="USP-like"/>
    <property type="match status" value="1"/>
</dbReference>
<dbReference type="Gene3D" id="3.40.50.620">
    <property type="entry name" value="HUPs"/>
    <property type="match status" value="1"/>
</dbReference>
<dbReference type="InterPro" id="IPR014729">
    <property type="entry name" value="Rossmann-like_a/b/a_fold"/>
</dbReference>
<dbReference type="InterPro" id="IPR006015">
    <property type="entry name" value="Universal_stress_UspA"/>
</dbReference>
<dbReference type="InterPro" id="IPR006016">
    <property type="entry name" value="UspA"/>
</dbReference>
<dbReference type="NCBIfam" id="NF012000">
    <property type="entry name" value="PRK15456.1"/>
    <property type="match status" value="1"/>
</dbReference>
<dbReference type="PANTHER" id="PTHR46268">
    <property type="entry name" value="STRESS RESPONSE PROTEIN NHAX"/>
    <property type="match status" value="1"/>
</dbReference>
<dbReference type="PANTHER" id="PTHR46268:SF6">
    <property type="entry name" value="UNIVERSAL STRESS PROTEIN UP12"/>
    <property type="match status" value="1"/>
</dbReference>
<dbReference type="Pfam" id="PF00582">
    <property type="entry name" value="Usp"/>
    <property type="match status" value="1"/>
</dbReference>
<dbReference type="PRINTS" id="PR01438">
    <property type="entry name" value="UNVRSLSTRESS"/>
</dbReference>
<dbReference type="SUPFAM" id="SSF52402">
    <property type="entry name" value="Adenine nucleotide alpha hydrolases-like"/>
    <property type="match status" value="1"/>
</dbReference>
<gene>
    <name type="primary">uspG</name>
    <name type="ordered locus">STM0614</name>
</gene>
<sequence length="142" mass="15901">MYKTIIMPVDVFEMELSDKAIRHAEFLAQQDGVIHLLHVLPGSASMSLHRFAADVRRFEEHLQHEAETRLQTMVGHFSIDPSRIKTHVRFGSVRDVVNEMGEELDADVVVIGSRNPSITTHLLGSNASSVVRHATLPVLVVR</sequence>